<comment type="interaction">
    <interactant intactId="EBI-713677">
        <id>Q9UGL9</id>
    </interactant>
    <interactant intactId="EBI-741181">
        <id>Q6RW13</id>
        <label>AGTRAP</label>
    </interactant>
    <organismsDiffer>false</organismsDiffer>
    <experiments>3</experiments>
</comment>
<comment type="interaction">
    <interactant intactId="EBI-713677">
        <id>Q9UGL9</id>
    </interactant>
    <interactant intactId="EBI-1211484">
        <id>P05187</id>
        <label>ALPP</label>
    </interactant>
    <organismsDiffer>false</organismsDiffer>
    <experiments>3</experiments>
</comment>
<comment type="interaction">
    <interactant intactId="EBI-713677">
        <id>Q9UGL9</id>
    </interactant>
    <interactant intactId="EBI-718729">
        <id>P55212</id>
        <label>CASP6</label>
    </interactant>
    <organismsDiffer>false</organismsDiffer>
    <experiments>3</experiments>
</comment>
<comment type="interaction">
    <interactant intactId="EBI-713677">
        <id>Q9UGL9</id>
    </interactant>
    <interactant intactId="EBI-14156412">
        <id>Q08AG9</id>
        <label>CYP21A2</label>
    </interactant>
    <organismsDiffer>false</organismsDiffer>
    <experiments>3</experiments>
</comment>
<comment type="interaction">
    <interactant intactId="EBI-713677">
        <id>Q9UGL9</id>
    </interactant>
    <interactant intactId="EBI-3867333">
        <id>A8MQ03</id>
        <label>CYSRT1</label>
    </interactant>
    <organismsDiffer>false</organismsDiffer>
    <experiments>3</experiments>
</comment>
<comment type="interaction">
    <interactant intactId="EBI-713677">
        <id>Q9UGL9</id>
    </interactant>
    <interactant intactId="EBI-747754">
        <id>P28799</id>
        <label>GRN</label>
    </interactant>
    <organismsDiffer>false</organismsDiffer>
    <experiments>3</experiments>
</comment>
<comment type="interaction">
    <interactant intactId="EBI-713677">
        <id>Q9UGL9</id>
    </interactant>
    <interactant intactId="EBI-852823">
        <id>P05412</id>
        <label>JUN</label>
    </interactant>
    <organismsDiffer>false</organismsDiffer>
    <experiments>3</experiments>
</comment>
<comment type="interaction">
    <interactant intactId="EBI-713677">
        <id>Q9UGL9</id>
    </interactant>
    <interactant intactId="EBI-11749135">
        <id>Q8IUG1</id>
        <label>KRTAP1-3</label>
    </interactant>
    <organismsDiffer>false</organismsDiffer>
    <experiments>3</experiments>
</comment>
<comment type="interaction">
    <interactant intactId="EBI-713677">
        <id>Q9UGL9</id>
    </interactant>
    <interactant intactId="EBI-10172290">
        <id>P60409</id>
        <label>KRTAP10-7</label>
    </interactant>
    <organismsDiffer>false</organismsDiffer>
    <experiments>6</experiments>
</comment>
<comment type="interaction">
    <interactant intactId="EBI-713677">
        <id>Q9UGL9</id>
    </interactant>
    <interactant intactId="EBI-10171774">
        <id>P60410</id>
        <label>KRTAP10-8</label>
    </interactant>
    <organismsDiffer>false</organismsDiffer>
    <experiments>6</experiments>
</comment>
<comment type="interaction">
    <interactant intactId="EBI-713677">
        <id>Q9UGL9</id>
    </interactant>
    <interactant intactId="EBI-10172052">
        <id>P60411</id>
        <label>KRTAP10-9</label>
    </interactant>
    <organismsDiffer>false</organismsDiffer>
    <experiments>8</experiments>
</comment>
<comment type="interaction">
    <interactant intactId="EBI-713677">
        <id>Q9UGL9</id>
    </interactant>
    <interactant intactId="EBI-11953334">
        <id>P60328</id>
        <label>KRTAP12-3</label>
    </interactant>
    <organismsDiffer>false</organismsDiffer>
    <experiments>3</experiments>
</comment>
<comment type="interaction">
    <interactant intactId="EBI-713677">
        <id>Q9UGL9</id>
    </interactant>
    <interactant intactId="EBI-34579671">
        <id>Q9BYQ7</id>
        <label>KRTAP4-1</label>
    </interactant>
    <organismsDiffer>false</organismsDiffer>
    <experiments>3</experiments>
</comment>
<comment type="interaction">
    <interactant intactId="EBI-713677">
        <id>Q9UGL9</id>
    </interactant>
    <interactant intactId="EBI-10302392">
        <id>Q9BYQ6</id>
        <label>KRTAP4-11</label>
    </interactant>
    <organismsDiffer>false</organismsDiffer>
    <experiments>6</experiments>
</comment>
<comment type="interaction">
    <interactant intactId="EBI-713677">
        <id>Q9UGL9</id>
    </interactant>
    <interactant intactId="EBI-739863">
        <id>Q9BQ66</id>
        <label>KRTAP4-12</label>
    </interactant>
    <organismsDiffer>false</organismsDiffer>
    <experiments>7</experiments>
</comment>
<comment type="interaction">
    <interactant intactId="EBI-713677">
        <id>Q9UGL9</id>
    </interactant>
    <interactant intactId="EBI-10172511">
        <id>Q9BYR5</id>
        <label>KRTAP4-2</label>
    </interactant>
    <organismsDiffer>false</organismsDiffer>
    <experiments>7</experiments>
</comment>
<comment type="interaction">
    <interactant intactId="EBI-713677">
        <id>Q9UGL9</id>
    </interactant>
    <interactant intactId="EBI-11958132">
        <id>Q9BYR3</id>
        <label>KRTAP4-4</label>
    </interactant>
    <organismsDiffer>false</organismsDiffer>
    <experiments>5</experiments>
</comment>
<comment type="interaction">
    <interactant intactId="EBI-713677">
        <id>Q9UGL9</id>
    </interactant>
    <interactant intactId="EBI-11993254">
        <id>Q9BYR2</id>
        <label>KRTAP4-5</label>
    </interactant>
    <organismsDiffer>false</organismsDiffer>
    <experiments>4</experiments>
</comment>
<comment type="interaction">
    <interactant intactId="EBI-713677">
        <id>Q9UGL9</id>
    </interactant>
    <interactant intactId="EBI-11993296">
        <id>Q6L8G4</id>
        <label>KRTAP5-11</label>
    </interactant>
    <organismsDiffer>false</organismsDiffer>
    <experiments>3</experiments>
</comment>
<comment type="interaction">
    <interactant intactId="EBI-713677">
        <id>Q9UGL9</id>
    </interactant>
    <interactant intactId="EBI-11958178">
        <id>Q701N4</id>
        <label>KRTAP5-2</label>
    </interactant>
    <organismsDiffer>false</organismsDiffer>
    <experiments>3</experiments>
</comment>
<comment type="interaction">
    <interactant intactId="EBI-713677">
        <id>Q9UGL9</id>
    </interactant>
    <interactant intactId="EBI-11974251">
        <id>Q6L8H2</id>
        <label>KRTAP5-3</label>
    </interactant>
    <organismsDiffer>false</organismsDiffer>
    <experiments>3</experiments>
</comment>
<comment type="interaction">
    <interactant intactId="EBI-713677">
        <id>Q9UGL9</id>
    </interactant>
    <interactant intactId="EBI-11963072">
        <id>Q6L8H1</id>
        <label>KRTAP5-4</label>
    </interactant>
    <organismsDiffer>false</organismsDiffer>
    <experiments>3</experiments>
</comment>
<comment type="interaction">
    <interactant intactId="EBI-713677">
        <id>Q9UGL9</id>
    </interactant>
    <interactant intactId="EBI-10250562">
        <id>Q6L8G9</id>
        <label>KRTAP5-6</label>
    </interactant>
    <organismsDiffer>false</organismsDiffer>
    <experiments>6</experiments>
</comment>
<comment type="interaction">
    <interactant intactId="EBI-713677">
        <id>Q9UGL9</id>
    </interactant>
    <interactant intactId="EBI-11987425">
        <id>Q6L8G8</id>
        <label>KRTAP5-7</label>
    </interactant>
    <organismsDiffer>false</organismsDiffer>
    <experiments>3</experiments>
</comment>
<comment type="interaction">
    <interactant intactId="EBI-713677">
        <id>Q9UGL9</id>
    </interactant>
    <interactant intactId="EBI-12134621">
        <id>O75690</id>
        <label>KRTAP5-8</label>
    </interactant>
    <organismsDiffer>false</organismsDiffer>
    <experiments>3</experiments>
</comment>
<comment type="interaction">
    <interactant intactId="EBI-713677">
        <id>Q9UGL9</id>
    </interactant>
    <interactant intactId="EBI-3958099">
        <id>P26371</id>
        <label>KRTAP5-9</label>
    </interactant>
    <organismsDiffer>false</organismsDiffer>
    <experiments>6</experiments>
</comment>
<comment type="interaction">
    <interactant intactId="EBI-713677">
        <id>Q9UGL9</id>
    </interactant>
    <interactant intactId="EBI-1044640">
        <id>Q9BYQ4</id>
        <label>KRTAP9-2</label>
    </interactant>
    <organismsDiffer>false</organismsDiffer>
    <experiments>3</experiments>
</comment>
<comment type="interaction">
    <interactant intactId="EBI-713677">
        <id>Q9UGL9</id>
    </interactant>
    <interactant intactId="EBI-1043191">
        <id>Q9BYQ3</id>
        <label>KRTAP9-3</label>
    </interactant>
    <organismsDiffer>false</organismsDiffer>
    <experiments>3</experiments>
</comment>
<comment type="interaction">
    <interactant intactId="EBI-713677">
        <id>Q9UGL9</id>
    </interactant>
    <interactant intactId="EBI-21591415">
        <id>P13473-2</id>
        <label>LAMP2</label>
    </interactant>
    <organismsDiffer>false</organismsDiffer>
    <experiments>3</experiments>
</comment>
<comment type="interaction">
    <interactant intactId="EBI-713677">
        <id>Q9UGL9</id>
    </interactant>
    <interactant intactId="EBI-12224199">
        <id>Q5T751</id>
        <label>LCE1C</label>
    </interactant>
    <organismsDiffer>false</organismsDiffer>
    <experiments>3</experiments>
</comment>
<comment type="interaction">
    <interactant intactId="EBI-713677">
        <id>Q9UGL9</id>
    </interactant>
    <interactant intactId="EBI-11958008">
        <id>Q5T754</id>
        <label>LCE1F</label>
    </interactant>
    <organismsDiffer>false</organismsDiffer>
    <experiments>3</experiments>
</comment>
<comment type="interaction">
    <interactant intactId="EBI-713677">
        <id>Q9UGL9</id>
    </interactant>
    <interactant intactId="EBI-11478468">
        <id>O14633</id>
        <label>LCE2B</label>
    </interactant>
    <organismsDiffer>false</organismsDiffer>
    <experiments>3</experiments>
</comment>
<comment type="interaction">
    <interactant intactId="EBI-713677">
        <id>Q9UGL9</id>
    </interactant>
    <interactant intactId="EBI-11973993">
        <id>Q5TA81</id>
        <label>LCE2C</label>
    </interactant>
    <organismsDiffer>false</organismsDiffer>
    <experiments>3</experiments>
</comment>
<comment type="interaction">
    <interactant intactId="EBI-713677">
        <id>Q9UGL9</id>
    </interactant>
    <interactant intactId="EBI-10246358">
        <id>Q5TA78</id>
        <label>LCE4A</label>
    </interactant>
    <organismsDiffer>false</organismsDiffer>
    <experiments>3</experiments>
</comment>
<comment type="interaction">
    <interactant intactId="EBI-713677">
        <id>Q9UGL9</id>
    </interactant>
    <interactant intactId="EBI-25832196">
        <id>Q14114-3</id>
        <label>LRP8</label>
    </interactant>
    <organismsDiffer>false</organismsDiffer>
    <experiments>3</experiments>
</comment>
<comment type="interaction">
    <interactant intactId="EBI-713677">
        <id>Q9UGL9</id>
    </interactant>
    <interactant intactId="EBI-2683507">
        <id>Q8N5G2</id>
        <label>MACO1</label>
    </interactant>
    <organismsDiffer>false</organismsDiffer>
    <experiments>5</experiments>
</comment>
<comment type="interaction">
    <interactant intactId="EBI-713677">
        <id>Q9UGL9</id>
    </interactant>
    <interactant intactId="EBI-748397">
        <id>P50222</id>
        <label>MEOX2</label>
    </interactant>
    <organismsDiffer>false</organismsDiffer>
    <experiments>4</experiments>
</comment>
<comment type="interaction">
    <interactant intactId="EBI-713677">
        <id>Q9UGL9</id>
    </interactant>
    <interactant intactId="EBI-945833">
        <id>Q7Z3S9</id>
        <label>NOTCH2NLA</label>
    </interactant>
    <organismsDiffer>false</organismsDiffer>
    <experiments>5</experiments>
</comment>
<comment type="interaction">
    <interactant intactId="EBI-713677">
        <id>Q9UGL9</id>
    </interactant>
    <interactant intactId="EBI-347978">
        <id>P37198</id>
        <label>NUP62</label>
    </interactant>
    <organismsDiffer>false</organismsDiffer>
    <experiments>6</experiments>
</comment>
<comment type="interaction">
    <interactant intactId="EBI-713677">
        <id>Q9UGL9</id>
    </interactant>
    <interactant intactId="EBI-10277776">
        <id>Q8WWZ8</id>
        <label>OIT3</label>
    </interactant>
    <organismsDiffer>false</organismsDiffer>
    <experiments>3</experiments>
</comment>
<comment type="interaction">
    <interactant intactId="EBI-713677">
        <id>Q9UGL9</id>
    </interactant>
    <interactant intactId="EBI-769257">
        <id>Q9NRQ2</id>
        <label>PLSCR4</label>
    </interactant>
    <organismsDiffer>false</organismsDiffer>
    <experiments>3</experiments>
</comment>
<comment type="interaction">
    <interactant intactId="EBI-713677">
        <id>Q9UGL9</id>
    </interactant>
    <interactant intactId="EBI-5280197">
        <id>O75400-2</id>
        <label>PRPF40A</label>
    </interactant>
    <organismsDiffer>false</organismsDiffer>
    <experiments>3</experiments>
</comment>
<comment type="interaction">
    <interactant intactId="EBI-713677">
        <id>Q9UGL9</id>
    </interactant>
    <interactant intactId="EBI-286642">
        <id>P62826</id>
        <label>RAN</label>
    </interactant>
    <organismsDiffer>false</organismsDiffer>
    <experiments>3</experiments>
</comment>
<comment type="interaction">
    <interactant intactId="EBI-713677">
        <id>Q9UGL9</id>
    </interactant>
    <interactant intactId="EBI-3918154">
        <id>Q9UGC6</id>
        <label>RGS17</label>
    </interactant>
    <organismsDiffer>false</organismsDiffer>
    <experiments>3</experiments>
</comment>
<comment type="interaction">
    <interactant intactId="EBI-713677">
        <id>Q9UGL9</id>
    </interactant>
    <interactant intactId="EBI-1052678">
        <id>O76081</id>
        <label>RGS20</label>
    </interactant>
    <organismsDiffer>false</organismsDiffer>
    <experiments>3</experiments>
</comment>
<comment type="interaction">
    <interactant intactId="EBI-713677">
        <id>Q9UGL9</id>
    </interactant>
    <interactant intactId="EBI-10178530">
        <id>O76081-6</id>
        <label>RGS20</label>
    </interactant>
    <organismsDiffer>false</organismsDiffer>
    <experiments>6</experiments>
</comment>
<comment type="interaction">
    <interactant intactId="EBI-713677">
        <id>Q9UGL9</id>
    </interactant>
    <interactant intactId="EBI-458391">
        <id>P04271</id>
        <label>S100B</label>
    </interactant>
    <organismsDiffer>false</organismsDiffer>
    <experiments>3</experiments>
</comment>
<comment type="interaction">
    <interactant intactId="EBI-713677">
        <id>Q9UGL9</id>
    </interactant>
    <interactant intactId="EBI-742426">
        <id>Q9H190</id>
        <label>SDCBP2</label>
    </interactant>
    <organismsDiffer>false</organismsDiffer>
    <experiments>3</experiments>
</comment>
<comment type="interaction">
    <interactant intactId="EBI-713677">
        <id>Q9UGL9</id>
    </interactant>
    <interactant intactId="EBI-2623095">
        <id>Q9Y371</id>
        <label>SH3GLB1</label>
    </interactant>
    <organismsDiffer>false</organismsDiffer>
    <experiments>3</experiments>
</comment>
<comment type="interaction">
    <interactant intactId="EBI-713677">
        <id>Q9UGL9</id>
    </interactant>
    <interactant intactId="EBI-1051105">
        <id>Q92504</id>
        <label>SLC39A7</label>
    </interactant>
    <organismsDiffer>false</organismsDiffer>
    <experiments>3</experiments>
</comment>
<comment type="interaction">
    <interactant intactId="EBI-713677">
        <id>Q9UGL9</id>
    </interactant>
    <interactant intactId="EBI-25892332">
        <id>P43405-2</id>
        <label>SYK</label>
    </interactant>
    <organismsDiffer>false</organismsDiffer>
    <experiments>3</experiments>
</comment>
<comment type="interaction">
    <interactant intactId="EBI-713677">
        <id>Q9UGL9</id>
    </interactant>
    <interactant intactId="EBI-2562368">
        <id>P22735</id>
        <label>TGM1</label>
    </interactant>
    <organismsDiffer>false</organismsDiffer>
    <experiments>3</experiments>
</comment>
<comment type="interaction">
    <interactant intactId="EBI-713677">
        <id>Q9UGL9</id>
    </interactant>
    <interactant intactId="EBI-11747707">
        <id>B2RUY7</id>
        <label>VWC2L</label>
    </interactant>
    <organismsDiffer>false</organismsDiffer>
    <experiments>3</experiments>
</comment>
<dbReference type="EMBL" id="AJ243662">
    <property type="protein sequence ID" value="CAB65093.1"/>
    <property type="molecule type" value="mRNA"/>
</dbReference>
<dbReference type="EMBL" id="CR457218">
    <property type="protein sequence ID" value="CAG33499.1"/>
    <property type="molecule type" value="mRNA"/>
</dbReference>
<dbReference type="EMBL" id="AL135842">
    <property type="status" value="NOT_ANNOTATED_CDS"/>
    <property type="molecule type" value="Genomic_DNA"/>
</dbReference>
<dbReference type="EMBL" id="CH471121">
    <property type="protein sequence ID" value="EAW53379.1"/>
    <property type="molecule type" value="Genomic_DNA"/>
</dbReference>
<dbReference type="EMBL" id="BC119710">
    <property type="protein sequence ID" value="AAI19711.1"/>
    <property type="molecule type" value="mRNA"/>
</dbReference>
<dbReference type="CCDS" id="CCDS1012.1"/>
<dbReference type="RefSeq" id="NP_061933.1">
    <property type="nucleotide sequence ID" value="NM_019060.3"/>
</dbReference>
<dbReference type="RefSeq" id="XP_011507958.1">
    <property type="nucleotide sequence ID" value="XM_011509656.3"/>
</dbReference>
<dbReference type="RefSeq" id="XP_054193113.1">
    <property type="nucleotide sequence ID" value="XM_054337138.1"/>
</dbReference>
<dbReference type="BioGRID" id="120031">
    <property type="interactions" value="65"/>
</dbReference>
<dbReference type="FunCoup" id="Q9UGL9">
    <property type="interactions" value="16"/>
</dbReference>
<dbReference type="IntAct" id="Q9UGL9">
    <property type="interactions" value="62"/>
</dbReference>
<dbReference type="STRING" id="9606.ENSP00000357779"/>
<dbReference type="GlyGen" id="Q9UGL9">
    <property type="glycosylation" value="1 site"/>
</dbReference>
<dbReference type="BioMuta" id="CRCT1"/>
<dbReference type="MassIVE" id="Q9UGL9"/>
<dbReference type="PaxDb" id="9606-ENSP00000357779"/>
<dbReference type="PeptideAtlas" id="Q9UGL9"/>
<dbReference type="ProteomicsDB" id="84233"/>
<dbReference type="Pumba" id="Q9UGL9"/>
<dbReference type="Antibodypedia" id="53893">
    <property type="antibodies" value="76 antibodies from 11 providers"/>
</dbReference>
<dbReference type="DNASU" id="54544"/>
<dbReference type="Ensembl" id="ENST00000368790.4">
    <property type="protein sequence ID" value="ENSP00000357779.3"/>
    <property type="gene ID" value="ENSG00000169509.6"/>
</dbReference>
<dbReference type="GeneID" id="54544"/>
<dbReference type="KEGG" id="hsa:54544"/>
<dbReference type="MANE-Select" id="ENST00000368790.4">
    <property type="protein sequence ID" value="ENSP00000357779.3"/>
    <property type="RefSeq nucleotide sequence ID" value="NM_019060.3"/>
    <property type="RefSeq protein sequence ID" value="NP_061933.1"/>
</dbReference>
<dbReference type="UCSC" id="uc001ezz.4">
    <property type="organism name" value="human"/>
</dbReference>
<dbReference type="AGR" id="HGNC:29875"/>
<dbReference type="CTD" id="54544"/>
<dbReference type="DisGeNET" id="54544"/>
<dbReference type="GeneCards" id="CRCT1"/>
<dbReference type="HGNC" id="HGNC:29875">
    <property type="gene designation" value="CRCT1"/>
</dbReference>
<dbReference type="HPA" id="ENSG00000169509">
    <property type="expression patterns" value="Tissue enhanced (cervix, esophagus, vagina)"/>
</dbReference>
<dbReference type="MIM" id="617426">
    <property type="type" value="gene"/>
</dbReference>
<dbReference type="neXtProt" id="NX_Q9UGL9"/>
<dbReference type="OpenTargets" id="ENSG00000169509"/>
<dbReference type="PharmGKB" id="PA162382812"/>
<dbReference type="VEuPathDB" id="HostDB:ENSG00000169509"/>
<dbReference type="eggNOG" id="KOG4726">
    <property type="taxonomic scope" value="Eukaryota"/>
</dbReference>
<dbReference type="GeneTree" id="ENSGT00730000113097"/>
<dbReference type="HOGENOM" id="CLU_2305176_0_0_1"/>
<dbReference type="InParanoid" id="Q9UGL9"/>
<dbReference type="OMA" id="GSQRSQC"/>
<dbReference type="PAN-GO" id="Q9UGL9">
    <property type="GO annotations" value="0 GO annotations based on evolutionary models"/>
</dbReference>
<dbReference type="PathwayCommons" id="Q9UGL9"/>
<dbReference type="SignaLink" id="Q9UGL9"/>
<dbReference type="BioGRID-ORCS" id="54544">
    <property type="hits" value="231 hits in 1132 CRISPR screens"/>
</dbReference>
<dbReference type="ChiTaRS" id="CRCT1">
    <property type="organism name" value="human"/>
</dbReference>
<dbReference type="GenomeRNAi" id="54544"/>
<dbReference type="Pharos" id="Q9UGL9">
    <property type="development level" value="Tbio"/>
</dbReference>
<dbReference type="PRO" id="PR:Q9UGL9"/>
<dbReference type="Proteomes" id="UP000005640">
    <property type="component" value="Chromosome 1"/>
</dbReference>
<dbReference type="RNAct" id="Q9UGL9">
    <property type="molecule type" value="protein"/>
</dbReference>
<dbReference type="Bgee" id="ENSG00000169509">
    <property type="expression patterns" value="Expressed in lower esophagus mucosa and 104 other cell types or tissues"/>
</dbReference>
<dbReference type="InterPro" id="IPR031698">
    <property type="entry name" value="NICE-1"/>
</dbReference>
<dbReference type="Pfam" id="PF15845">
    <property type="entry name" value="NICE-1"/>
    <property type="match status" value="1"/>
</dbReference>
<gene>
    <name type="primary">CRCT1</name>
    <name type="synonym">C1orf42</name>
    <name type="synonym">NICE1</name>
</gene>
<evidence type="ECO:0000256" key="1">
    <source>
        <dbReference type="SAM" id="MobiDB-lite"/>
    </source>
</evidence>
<name>CRCT1_HUMAN</name>
<feature type="chain" id="PRO_0000096812" description="Cysteine-rich C-terminal protein 1">
    <location>
        <begin position="1"/>
        <end position="99"/>
    </location>
</feature>
<feature type="region of interest" description="Disordered" evidence="1">
    <location>
        <begin position="1"/>
        <end position="42"/>
    </location>
</feature>
<feature type="region of interest" description="Disordered" evidence="1">
    <location>
        <begin position="65"/>
        <end position="99"/>
    </location>
</feature>
<feature type="compositionally biased region" description="Pro residues" evidence="1">
    <location>
        <begin position="22"/>
        <end position="32"/>
    </location>
</feature>
<feature type="compositionally biased region" description="Low complexity" evidence="1">
    <location>
        <begin position="83"/>
        <end position="99"/>
    </location>
</feature>
<feature type="sequence variant" id="VAR_050906" description="In dbSNP:rs16834168.">
    <original>C</original>
    <variation>Y</variation>
    <location>
        <position position="96"/>
    </location>
</feature>
<reference key="1">
    <citation type="journal article" date="2001" name="Genome Res.">
        <title>Identification of human epidermal differentiation complex (EDC)-encoded genes by subtractive hybridization of entire YACs to a gridded keratinocyte cDNA library.</title>
        <authorList>
            <person name="Marenholz I."/>
            <person name="Zirra M."/>
            <person name="Fischer D.F."/>
            <person name="Backendorf C."/>
            <person name="Ziegler A."/>
            <person name="Mischke D."/>
        </authorList>
    </citation>
    <scope>NUCLEOTIDE SEQUENCE [MRNA]</scope>
    <source>
        <tissue>Keratinocyte</tissue>
    </source>
</reference>
<reference key="2">
    <citation type="submission" date="2004-06" db="EMBL/GenBank/DDBJ databases">
        <title>Cloning of human full open reading frames in Gateway(TM) system entry vector (pDONR201).</title>
        <authorList>
            <person name="Ebert L."/>
            <person name="Schick M."/>
            <person name="Neubert P."/>
            <person name="Schatten R."/>
            <person name="Henze S."/>
            <person name="Korn B."/>
        </authorList>
    </citation>
    <scope>NUCLEOTIDE SEQUENCE [LARGE SCALE MRNA]</scope>
</reference>
<reference key="3">
    <citation type="journal article" date="2006" name="Nature">
        <title>The DNA sequence and biological annotation of human chromosome 1.</title>
        <authorList>
            <person name="Gregory S.G."/>
            <person name="Barlow K.F."/>
            <person name="McLay K.E."/>
            <person name="Kaul R."/>
            <person name="Swarbreck D."/>
            <person name="Dunham A."/>
            <person name="Scott C.E."/>
            <person name="Howe K.L."/>
            <person name="Woodfine K."/>
            <person name="Spencer C.C.A."/>
            <person name="Jones M.C."/>
            <person name="Gillson C."/>
            <person name="Searle S."/>
            <person name="Zhou Y."/>
            <person name="Kokocinski F."/>
            <person name="McDonald L."/>
            <person name="Evans R."/>
            <person name="Phillips K."/>
            <person name="Atkinson A."/>
            <person name="Cooper R."/>
            <person name="Jones C."/>
            <person name="Hall R.E."/>
            <person name="Andrews T.D."/>
            <person name="Lloyd C."/>
            <person name="Ainscough R."/>
            <person name="Almeida J.P."/>
            <person name="Ambrose K.D."/>
            <person name="Anderson F."/>
            <person name="Andrew R.W."/>
            <person name="Ashwell R.I.S."/>
            <person name="Aubin K."/>
            <person name="Babbage A.K."/>
            <person name="Bagguley C.L."/>
            <person name="Bailey J."/>
            <person name="Beasley H."/>
            <person name="Bethel G."/>
            <person name="Bird C.P."/>
            <person name="Bray-Allen S."/>
            <person name="Brown J.Y."/>
            <person name="Brown A.J."/>
            <person name="Buckley D."/>
            <person name="Burton J."/>
            <person name="Bye J."/>
            <person name="Carder C."/>
            <person name="Chapman J.C."/>
            <person name="Clark S.Y."/>
            <person name="Clarke G."/>
            <person name="Clee C."/>
            <person name="Cobley V."/>
            <person name="Collier R.E."/>
            <person name="Corby N."/>
            <person name="Coville G.J."/>
            <person name="Davies J."/>
            <person name="Deadman R."/>
            <person name="Dunn M."/>
            <person name="Earthrowl M."/>
            <person name="Ellington A.G."/>
            <person name="Errington H."/>
            <person name="Frankish A."/>
            <person name="Frankland J."/>
            <person name="French L."/>
            <person name="Garner P."/>
            <person name="Garnett J."/>
            <person name="Gay L."/>
            <person name="Ghori M.R.J."/>
            <person name="Gibson R."/>
            <person name="Gilby L.M."/>
            <person name="Gillett W."/>
            <person name="Glithero R.J."/>
            <person name="Grafham D.V."/>
            <person name="Griffiths C."/>
            <person name="Griffiths-Jones S."/>
            <person name="Grocock R."/>
            <person name="Hammond S."/>
            <person name="Harrison E.S.I."/>
            <person name="Hart E."/>
            <person name="Haugen E."/>
            <person name="Heath P.D."/>
            <person name="Holmes S."/>
            <person name="Holt K."/>
            <person name="Howden P.J."/>
            <person name="Hunt A.R."/>
            <person name="Hunt S.E."/>
            <person name="Hunter G."/>
            <person name="Isherwood J."/>
            <person name="James R."/>
            <person name="Johnson C."/>
            <person name="Johnson D."/>
            <person name="Joy A."/>
            <person name="Kay M."/>
            <person name="Kershaw J.K."/>
            <person name="Kibukawa M."/>
            <person name="Kimberley A.M."/>
            <person name="King A."/>
            <person name="Knights A.J."/>
            <person name="Lad H."/>
            <person name="Laird G."/>
            <person name="Lawlor S."/>
            <person name="Leongamornlert D.A."/>
            <person name="Lloyd D.M."/>
            <person name="Loveland J."/>
            <person name="Lovell J."/>
            <person name="Lush M.J."/>
            <person name="Lyne R."/>
            <person name="Martin S."/>
            <person name="Mashreghi-Mohammadi M."/>
            <person name="Matthews L."/>
            <person name="Matthews N.S.W."/>
            <person name="McLaren S."/>
            <person name="Milne S."/>
            <person name="Mistry S."/>
            <person name="Moore M.J.F."/>
            <person name="Nickerson T."/>
            <person name="O'Dell C.N."/>
            <person name="Oliver K."/>
            <person name="Palmeiri A."/>
            <person name="Palmer S.A."/>
            <person name="Parker A."/>
            <person name="Patel D."/>
            <person name="Pearce A.V."/>
            <person name="Peck A.I."/>
            <person name="Pelan S."/>
            <person name="Phelps K."/>
            <person name="Phillimore B.J."/>
            <person name="Plumb R."/>
            <person name="Rajan J."/>
            <person name="Raymond C."/>
            <person name="Rouse G."/>
            <person name="Saenphimmachak C."/>
            <person name="Sehra H.K."/>
            <person name="Sheridan E."/>
            <person name="Shownkeen R."/>
            <person name="Sims S."/>
            <person name="Skuce C.D."/>
            <person name="Smith M."/>
            <person name="Steward C."/>
            <person name="Subramanian S."/>
            <person name="Sycamore N."/>
            <person name="Tracey A."/>
            <person name="Tromans A."/>
            <person name="Van Helmond Z."/>
            <person name="Wall M."/>
            <person name="Wallis J.M."/>
            <person name="White S."/>
            <person name="Whitehead S.L."/>
            <person name="Wilkinson J.E."/>
            <person name="Willey D.L."/>
            <person name="Williams H."/>
            <person name="Wilming L."/>
            <person name="Wray P.W."/>
            <person name="Wu Z."/>
            <person name="Coulson A."/>
            <person name="Vaudin M."/>
            <person name="Sulston J.E."/>
            <person name="Durbin R.M."/>
            <person name="Hubbard T."/>
            <person name="Wooster R."/>
            <person name="Dunham I."/>
            <person name="Carter N.P."/>
            <person name="McVean G."/>
            <person name="Ross M.T."/>
            <person name="Harrow J."/>
            <person name="Olson M.V."/>
            <person name="Beck S."/>
            <person name="Rogers J."/>
            <person name="Bentley D.R."/>
        </authorList>
    </citation>
    <scope>NUCLEOTIDE SEQUENCE [LARGE SCALE GENOMIC DNA]</scope>
</reference>
<reference key="4">
    <citation type="submission" date="2005-09" db="EMBL/GenBank/DDBJ databases">
        <authorList>
            <person name="Mural R.J."/>
            <person name="Istrail S."/>
            <person name="Sutton G.G."/>
            <person name="Florea L."/>
            <person name="Halpern A.L."/>
            <person name="Mobarry C.M."/>
            <person name="Lippert R."/>
            <person name="Walenz B."/>
            <person name="Shatkay H."/>
            <person name="Dew I."/>
            <person name="Miller J.R."/>
            <person name="Flanigan M.J."/>
            <person name="Edwards N.J."/>
            <person name="Bolanos R."/>
            <person name="Fasulo D."/>
            <person name="Halldorsson B.V."/>
            <person name="Hannenhalli S."/>
            <person name="Turner R."/>
            <person name="Yooseph S."/>
            <person name="Lu F."/>
            <person name="Nusskern D.R."/>
            <person name="Shue B.C."/>
            <person name="Zheng X.H."/>
            <person name="Zhong F."/>
            <person name="Delcher A.L."/>
            <person name="Huson D.H."/>
            <person name="Kravitz S.A."/>
            <person name="Mouchard L."/>
            <person name="Reinert K."/>
            <person name="Remington K.A."/>
            <person name="Clark A.G."/>
            <person name="Waterman M.S."/>
            <person name="Eichler E.E."/>
            <person name="Adams M.D."/>
            <person name="Hunkapiller M.W."/>
            <person name="Myers E.W."/>
            <person name="Venter J.C."/>
        </authorList>
    </citation>
    <scope>NUCLEOTIDE SEQUENCE [LARGE SCALE GENOMIC DNA]</scope>
</reference>
<reference key="5">
    <citation type="journal article" date="2004" name="Genome Res.">
        <title>The status, quality, and expansion of the NIH full-length cDNA project: the Mammalian Gene Collection (MGC).</title>
        <authorList>
            <consortium name="The MGC Project Team"/>
        </authorList>
    </citation>
    <scope>NUCLEOTIDE SEQUENCE [LARGE SCALE MRNA]</scope>
</reference>
<organism>
    <name type="scientific">Homo sapiens</name>
    <name type="common">Human</name>
    <dbReference type="NCBI Taxonomy" id="9606"/>
    <lineage>
        <taxon>Eukaryota</taxon>
        <taxon>Metazoa</taxon>
        <taxon>Chordata</taxon>
        <taxon>Craniata</taxon>
        <taxon>Vertebrata</taxon>
        <taxon>Euteleostomi</taxon>
        <taxon>Mammalia</taxon>
        <taxon>Eutheria</taxon>
        <taxon>Euarchontoglires</taxon>
        <taxon>Primates</taxon>
        <taxon>Haplorrhini</taxon>
        <taxon>Catarrhini</taxon>
        <taxon>Hominidae</taxon>
        <taxon>Homo</taxon>
    </lineage>
</organism>
<sequence>MSSQQSAVSAKGFSKGSSQGPAPCPAPAPTPAPASSSSCCGSGRGCCGDSGCCGSSSTSCCCFPRRRRRQRSSGCCCCGGGSQRSQRSNNRSSGCCSGC</sequence>
<accession>Q9UGL9</accession>
<accession>A4QN00</accession>
<accession>Q6IAD7</accession>
<keyword id="KW-1267">Proteomics identification</keyword>
<keyword id="KW-1185">Reference proteome</keyword>
<protein>
    <recommendedName>
        <fullName>Cysteine-rich C-terminal protein 1</fullName>
    </recommendedName>
    <alternativeName>
        <fullName>Protein NICE-1</fullName>
    </alternativeName>
</protein>
<proteinExistence type="evidence at protein level"/>